<gene>
    <name evidence="1" type="primary">lspA</name>
    <name type="ordered locus">Blon_0804</name>
    <name type="ordered locus">BLIJ_0819</name>
</gene>
<dbReference type="EC" id="3.4.23.36" evidence="1"/>
<dbReference type="EMBL" id="CP001095">
    <property type="protein sequence ID" value="ACJ51907.1"/>
    <property type="molecule type" value="Genomic_DNA"/>
</dbReference>
<dbReference type="EMBL" id="AP010889">
    <property type="protein sequence ID" value="BAJ68411.1"/>
    <property type="molecule type" value="Genomic_DNA"/>
</dbReference>
<dbReference type="RefSeq" id="WP_012577184.1">
    <property type="nucleotide sequence ID" value="NZ_JDTT01000007.1"/>
</dbReference>
<dbReference type="SMR" id="B7GQ27"/>
<dbReference type="KEGG" id="bln:Blon_0804"/>
<dbReference type="KEGG" id="blon:BLIJ_0819"/>
<dbReference type="PATRIC" id="fig|391904.8.peg.826"/>
<dbReference type="HOGENOM" id="CLU_083252_2_3_11"/>
<dbReference type="UniPathway" id="UPA00665"/>
<dbReference type="Proteomes" id="UP000001360">
    <property type="component" value="Chromosome"/>
</dbReference>
<dbReference type="GO" id="GO:0005886">
    <property type="term" value="C:plasma membrane"/>
    <property type="evidence" value="ECO:0007669"/>
    <property type="project" value="UniProtKB-SubCell"/>
</dbReference>
<dbReference type="GO" id="GO:0004190">
    <property type="term" value="F:aspartic-type endopeptidase activity"/>
    <property type="evidence" value="ECO:0007669"/>
    <property type="project" value="UniProtKB-UniRule"/>
</dbReference>
<dbReference type="GO" id="GO:0006508">
    <property type="term" value="P:proteolysis"/>
    <property type="evidence" value="ECO:0007669"/>
    <property type="project" value="UniProtKB-KW"/>
</dbReference>
<dbReference type="HAMAP" id="MF_00161">
    <property type="entry name" value="LspA"/>
    <property type="match status" value="1"/>
</dbReference>
<dbReference type="InterPro" id="IPR001872">
    <property type="entry name" value="Peptidase_A8"/>
</dbReference>
<dbReference type="NCBIfam" id="TIGR00077">
    <property type="entry name" value="lspA"/>
    <property type="match status" value="1"/>
</dbReference>
<dbReference type="NCBIfam" id="NF011353">
    <property type="entry name" value="PRK14771.1"/>
    <property type="match status" value="1"/>
</dbReference>
<dbReference type="PANTHER" id="PTHR33695">
    <property type="entry name" value="LIPOPROTEIN SIGNAL PEPTIDASE"/>
    <property type="match status" value="1"/>
</dbReference>
<dbReference type="PANTHER" id="PTHR33695:SF1">
    <property type="entry name" value="LIPOPROTEIN SIGNAL PEPTIDASE"/>
    <property type="match status" value="1"/>
</dbReference>
<dbReference type="Pfam" id="PF01252">
    <property type="entry name" value="Peptidase_A8"/>
    <property type="match status" value="1"/>
</dbReference>
<dbReference type="PRINTS" id="PR00781">
    <property type="entry name" value="LIPOSIGPTASE"/>
</dbReference>
<protein>
    <recommendedName>
        <fullName evidence="1">Lipoprotein signal peptidase</fullName>
        <ecNumber evidence="1">3.4.23.36</ecNumber>
    </recommendedName>
    <alternativeName>
        <fullName evidence="1">Prolipoprotein signal peptidase</fullName>
    </alternativeName>
    <alternativeName>
        <fullName evidence="1">Signal peptidase II</fullName>
        <shortName evidence="1">SPase II</shortName>
    </alternativeName>
</protein>
<feature type="chain" id="PRO_1000123487" description="Lipoprotein signal peptidase">
    <location>
        <begin position="1"/>
        <end position="182"/>
    </location>
</feature>
<feature type="transmembrane region" description="Helical" evidence="1">
    <location>
        <begin position="12"/>
        <end position="32"/>
    </location>
</feature>
<feature type="transmembrane region" description="Helical" evidence="1">
    <location>
        <begin position="68"/>
        <end position="88"/>
    </location>
</feature>
<feature type="transmembrane region" description="Helical" evidence="1">
    <location>
        <begin position="91"/>
        <end position="111"/>
    </location>
</feature>
<feature type="transmembrane region" description="Helical" evidence="1">
    <location>
        <begin position="135"/>
        <end position="155"/>
    </location>
</feature>
<feature type="active site" evidence="1">
    <location>
        <position position="127"/>
    </location>
</feature>
<feature type="active site" evidence="1">
    <location>
        <position position="140"/>
    </location>
</feature>
<organism>
    <name type="scientific">Bifidobacterium longum subsp. infantis (strain ATCC 15697 / DSM 20088 / JCM 1222 / NCTC 11817 / S12)</name>
    <dbReference type="NCBI Taxonomy" id="391904"/>
    <lineage>
        <taxon>Bacteria</taxon>
        <taxon>Bacillati</taxon>
        <taxon>Actinomycetota</taxon>
        <taxon>Actinomycetes</taxon>
        <taxon>Bifidobacteriales</taxon>
        <taxon>Bifidobacteriaceae</taxon>
        <taxon>Bifidobacterium</taxon>
    </lineage>
</organism>
<accession>B7GQ27</accession>
<accession>E8MQY6</accession>
<comment type="function">
    <text evidence="1">This protein specifically catalyzes the removal of signal peptides from prolipoproteins.</text>
</comment>
<comment type="catalytic activity">
    <reaction evidence="1">
        <text>Release of signal peptides from bacterial membrane prolipoproteins. Hydrolyzes -Xaa-Yaa-Zaa-|-(S,diacylglyceryl)Cys-, in which Xaa is hydrophobic (preferably Leu), and Yaa (Ala or Ser) and Zaa (Gly or Ala) have small, neutral side chains.</text>
        <dbReference type="EC" id="3.4.23.36"/>
    </reaction>
</comment>
<comment type="pathway">
    <text evidence="1">Protein modification; lipoprotein biosynthesis (signal peptide cleavage).</text>
</comment>
<comment type="subcellular location">
    <subcellularLocation>
        <location evidence="1">Cell membrane</location>
        <topology evidence="1">Multi-pass membrane protein</topology>
    </subcellularLocation>
</comment>
<comment type="similarity">
    <text evidence="1">Belongs to the peptidase A8 family.</text>
</comment>
<sequence>MTNQQGRLRTRVAVFACVAAAALIVDQLTKAWAMAALSNGQTIRVIPGLLSFTLVRNPGASLGMGSGATWVISLLAVVACVALAVAGVRTISMKWSVALSFAFAGALGNLIDRVMYADGFLNGKVVDFLNYGWSVGNVADIYLVVAGVVLVILILMGEPFSHKDLIEQSDESLQSEPEADAK</sequence>
<proteinExistence type="inferred from homology"/>
<name>LSPA_BIFLS</name>
<reference key="1">
    <citation type="journal article" date="2008" name="Proc. Natl. Acad. Sci. U.S.A.">
        <title>The genome sequence of Bifidobacterium longum subsp. infantis reveals adaptations for milk utilization within the infant microbiome.</title>
        <authorList>
            <person name="Sela D.A."/>
            <person name="Chapman J."/>
            <person name="Adeuya A."/>
            <person name="Kim J.H."/>
            <person name="Chen F."/>
            <person name="Whitehead T.R."/>
            <person name="Lapidus A."/>
            <person name="Rokhsar D.S."/>
            <person name="Lebrilla C.B."/>
            <person name="German J.B."/>
            <person name="Price N.P."/>
            <person name="Richardson P.M."/>
            <person name="Mills D.A."/>
        </authorList>
    </citation>
    <scope>NUCLEOTIDE SEQUENCE [LARGE SCALE GENOMIC DNA]</scope>
    <source>
        <strain>ATCC 15697 / DSM 20088 / JCM 1222 / NCTC 11817 / S12</strain>
    </source>
</reference>
<reference key="2">
    <citation type="journal article" date="2011" name="Nature">
        <title>Bifidobacteria can protect from enteropathogenic infection through production of acetate.</title>
        <authorList>
            <person name="Fukuda S."/>
            <person name="Toh H."/>
            <person name="Hase K."/>
            <person name="Oshima K."/>
            <person name="Nakanishi Y."/>
            <person name="Yoshimura K."/>
            <person name="Tobe T."/>
            <person name="Clarke J.M."/>
            <person name="Topping D.L."/>
            <person name="Suzuki T."/>
            <person name="Taylor T.D."/>
            <person name="Itoh K."/>
            <person name="Kikuchi J."/>
            <person name="Morita H."/>
            <person name="Hattori M."/>
            <person name="Ohno H."/>
        </authorList>
    </citation>
    <scope>NUCLEOTIDE SEQUENCE [LARGE SCALE GENOMIC DNA]</scope>
    <source>
        <strain>ATCC 15697 / DSM 20088 / JCM 1222 / NCTC 11817 / S12</strain>
    </source>
</reference>
<keyword id="KW-0064">Aspartyl protease</keyword>
<keyword id="KW-1003">Cell membrane</keyword>
<keyword id="KW-0378">Hydrolase</keyword>
<keyword id="KW-0472">Membrane</keyword>
<keyword id="KW-0645">Protease</keyword>
<keyword id="KW-0812">Transmembrane</keyword>
<keyword id="KW-1133">Transmembrane helix</keyword>
<evidence type="ECO:0000255" key="1">
    <source>
        <dbReference type="HAMAP-Rule" id="MF_00161"/>
    </source>
</evidence>